<reference key="1">
    <citation type="submission" date="2004-06" db="EMBL/GenBank/DDBJ databases">
        <authorList>
            <consortium name="NIH - Xenopus Gene Collection (XGC) project"/>
        </authorList>
    </citation>
    <scope>NUCLEOTIDE SEQUENCE [LARGE SCALE MRNA]</scope>
    <source>
        <tissue>Brain</tissue>
    </source>
</reference>
<comment type="function">
    <text evidence="1">May play a role in the organization of actin filament arrays within muscle cells.</text>
</comment>
<comment type="subcellular location">
    <subcellularLocation>
        <location evidence="1">Cytoplasm</location>
        <location evidence="1">Myofibril</location>
        <location evidence="1">Sarcomere</location>
        <location evidence="1">Z line</location>
    </subcellularLocation>
    <text evidence="1">Localizes to myofiber Z-lines.</text>
</comment>
<proteinExistence type="evidence at transcript level"/>
<keyword id="KW-0963">Cytoplasm</keyword>
<keyword id="KW-0440">LIM domain</keyword>
<keyword id="KW-0479">Metal-binding</keyword>
<keyword id="KW-1185">Reference proteome</keyword>
<keyword id="KW-0862">Zinc</keyword>
<sequence length="358" mass="38979">MPQNVLLPGPAPWGFRLTGGIDFNQPLVISRITPGSKSSVANLCPGDVILAIDGFSTETMTHAEAQDRIKAATDQLCLKIDRAETRIWSPQVCEDGKAQPFKINLEAEPQDLGFFEHKHNIRPKPFILPGRSSGSSTPSGFDPGSGRSTPSSVSTIDPVELKAASRIAPNVPLEMELPGVKIVHAQFNTPMQLYSDDNIMESLQGQVSTILGEKTPMSDPVPPSVPQSDVYKLLHDDTEHPSKPRQSGSFKILQDMVDDDPDRPSGTRSVRAPVTKPNTGAAAVQKVPICDRCGNGIVGTVVKAKDKLRHPDCFVCSDCNLNLKQKGYFFVEGQLYCEAHARARMRPPEGYDAVTVYH</sequence>
<protein>
    <recommendedName>
        <fullName>PDZ and LIM domain protein 3</fullName>
    </recommendedName>
</protein>
<organism>
    <name type="scientific">Xenopus laevis</name>
    <name type="common">African clawed frog</name>
    <dbReference type="NCBI Taxonomy" id="8355"/>
    <lineage>
        <taxon>Eukaryota</taxon>
        <taxon>Metazoa</taxon>
        <taxon>Chordata</taxon>
        <taxon>Craniata</taxon>
        <taxon>Vertebrata</taxon>
        <taxon>Euteleostomi</taxon>
        <taxon>Amphibia</taxon>
        <taxon>Batrachia</taxon>
        <taxon>Anura</taxon>
        <taxon>Pipoidea</taxon>
        <taxon>Pipidae</taxon>
        <taxon>Xenopodinae</taxon>
        <taxon>Xenopus</taxon>
        <taxon>Xenopus</taxon>
    </lineage>
</organism>
<dbReference type="EMBL" id="BC074488">
    <property type="protein sequence ID" value="AAH74488.1"/>
    <property type="molecule type" value="mRNA"/>
</dbReference>
<dbReference type="RefSeq" id="NP_001086326.1">
    <property type="nucleotide sequence ID" value="NM_001092857.1"/>
</dbReference>
<dbReference type="SMR" id="Q6GLJ6"/>
<dbReference type="DNASU" id="444755"/>
<dbReference type="GeneID" id="444755"/>
<dbReference type="KEGG" id="xla:444755"/>
<dbReference type="AGR" id="Xenbase:XB-GENE-6077880"/>
<dbReference type="CTD" id="444755"/>
<dbReference type="Xenbase" id="XB-GENE-6077880">
    <property type="gene designation" value="pdlim3.L"/>
</dbReference>
<dbReference type="OMA" id="DKHEGKY"/>
<dbReference type="OrthoDB" id="1293114at2759"/>
<dbReference type="Proteomes" id="UP000186698">
    <property type="component" value="Chromosome 1L"/>
</dbReference>
<dbReference type="Bgee" id="444755">
    <property type="expression patterns" value="Expressed in muscle tissue and 17 other cell types or tissues"/>
</dbReference>
<dbReference type="GO" id="GO:0005912">
    <property type="term" value="C:adherens junction"/>
    <property type="evidence" value="ECO:0000318"/>
    <property type="project" value="GO_Central"/>
</dbReference>
<dbReference type="GO" id="GO:0031941">
    <property type="term" value="C:filamentous actin"/>
    <property type="evidence" value="ECO:0000318"/>
    <property type="project" value="GO_Central"/>
</dbReference>
<dbReference type="GO" id="GO:0001725">
    <property type="term" value="C:stress fiber"/>
    <property type="evidence" value="ECO:0000318"/>
    <property type="project" value="GO_Central"/>
</dbReference>
<dbReference type="GO" id="GO:0030018">
    <property type="term" value="C:Z disc"/>
    <property type="evidence" value="ECO:0000318"/>
    <property type="project" value="GO_Central"/>
</dbReference>
<dbReference type="GO" id="GO:0003779">
    <property type="term" value="F:actin binding"/>
    <property type="evidence" value="ECO:0000318"/>
    <property type="project" value="GO_Central"/>
</dbReference>
<dbReference type="GO" id="GO:0046872">
    <property type="term" value="F:metal ion binding"/>
    <property type="evidence" value="ECO:0007669"/>
    <property type="project" value="UniProtKB-KW"/>
</dbReference>
<dbReference type="GO" id="GO:0051371">
    <property type="term" value="F:muscle alpha-actinin binding"/>
    <property type="evidence" value="ECO:0000318"/>
    <property type="project" value="GO_Central"/>
</dbReference>
<dbReference type="GO" id="GO:0030036">
    <property type="term" value="P:actin cytoskeleton organization"/>
    <property type="evidence" value="ECO:0000318"/>
    <property type="project" value="GO_Central"/>
</dbReference>
<dbReference type="GO" id="GO:0007507">
    <property type="term" value="P:heart development"/>
    <property type="evidence" value="ECO:0000318"/>
    <property type="project" value="GO_Central"/>
</dbReference>
<dbReference type="GO" id="GO:0061061">
    <property type="term" value="P:muscle structure development"/>
    <property type="evidence" value="ECO:0000318"/>
    <property type="project" value="GO_Central"/>
</dbReference>
<dbReference type="CDD" id="cd09450">
    <property type="entry name" value="LIM_ALP"/>
    <property type="match status" value="1"/>
</dbReference>
<dbReference type="CDD" id="cd06753">
    <property type="entry name" value="PDZ_PDLIM-like"/>
    <property type="match status" value="1"/>
</dbReference>
<dbReference type="FunFam" id="2.10.110.10:FF:000026">
    <property type="entry name" value="PDZ and LIM domain protein 3"/>
    <property type="match status" value="1"/>
</dbReference>
<dbReference type="FunFam" id="2.30.42.10:FF:000055">
    <property type="entry name" value="PDZ and LIM domain protein 3"/>
    <property type="match status" value="1"/>
</dbReference>
<dbReference type="Gene3D" id="2.30.42.10">
    <property type="match status" value="1"/>
</dbReference>
<dbReference type="Gene3D" id="2.10.110.10">
    <property type="entry name" value="Cysteine Rich Protein"/>
    <property type="match status" value="1"/>
</dbReference>
<dbReference type="InterPro" id="IPR031847">
    <property type="entry name" value="PDLI1-4/Zasp-like_mid"/>
</dbReference>
<dbReference type="InterPro" id="IPR001478">
    <property type="entry name" value="PDZ"/>
</dbReference>
<dbReference type="InterPro" id="IPR050604">
    <property type="entry name" value="PDZ-LIM_domain"/>
</dbReference>
<dbReference type="InterPro" id="IPR036034">
    <property type="entry name" value="PDZ_sf"/>
</dbReference>
<dbReference type="InterPro" id="IPR006643">
    <property type="entry name" value="Zasp-like_motif"/>
</dbReference>
<dbReference type="InterPro" id="IPR001781">
    <property type="entry name" value="Znf_LIM"/>
</dbReference>
<dbReference type="PANTHER" id="PTHR24214:SF7">
    <property type="entry name" value="PDZ AND LIM DOMAIN PROTEIN 3"/>
    <property type="match status" value="1"/>
</dbReference>
<dbReference type="PANTHER" id="PTHR24214">
    <property type="entry name" value="PDZ AND LIM DOMAIN PROTEIN ZASP"/>
    <property type="match status" value="1"/>
</dbReference>
<dbReference type="Pfam" id="PF15936">
    <property type="entry name" value="DUF4749"/>
    <property type="match status" value="1"/>
</dbReference>
<dbReference type="Pfam" id="PF00412">
    <property type="entry name" value="LIM"/>
    <property type="match status" value="1"/>
</dbReference>
<dbReference type="Pfam" id="PF00595">
    <property type="entry name" value="PDZ"/>
    <property type="match status" value="1"/>
</dbReference>
<dbReference type="SMART" id="SM00132">
    <property type="entry name" value="LIM"/>
    <property type="match status" value="1"/>
</dbReference>
<dbReference type="SMART" id="SM00228">
    <property type="entry name" value="PDZ"/>
    <property type="match status" value="1"/>
</dbReference>
<dbReference type="SMART" id="SM00735">
    <property type="entry name" value="ZM"/>
    <property type="match status" value="1"/>
</dbReference>
<dbReference type="SUPFAM" id="SSF57716">
    <property type="entry name" value="Glucocorticoid receptor-like (DNA-binding domain)"/>
    <property type="match status" value="2"/>
</dbReference>
<dbReference type="SUPFAM" id="SSF50156">
    <property type="entry name" value="PDZ domain-like"/>
    <property type="match status" value="1"/>
</dbReference>
<dbReference type="PROSITE" id="PS00478">
    <property type="entry name" value="LIM_DOMAIN_1"/>
    <property type="match status" value="1"/>
</dbReference>
<dbReference type="PROSITE" id="PS50023">
    <property type="entry name" value="LIM_DOMAIN_2"/>
    <property type="match status" value="1"/>
</dbReference>
<dbReference type="PROSITE" id="PS50106">
    <property type="entry name" value="PDZ"/>
    <property type="match status" value="1"/>
</dbReference>
<name>PDLI3_XENLA</name>
<feature type="chain" id="PRO_0000075872" description="PDZ and LIM domain protein 3">
    <location>
        <begin position="1"/>
        <end position="358"/>
    </location>
</feature>
<feature type="domain" description="PDZ" evidence="3">
    <location>
        <begin position="1"/>
        <end position="84"/>
    </location>
</feature>
<feature type="domain" description="LIM zinc-binding" evidence="2">
    <location>
        <begin position="288"/>
        <end position="347"/>
    </location>
</feature>
<feature type="region of interest" description="Disordered" evidence="4">
    <location>
        <begin position="126"/>
        <end position="155"/>
    </location>
</feature>
<feature type="region of interest" description="Disordered" evidence="4">
    <location>
        <begin position="237"/>
        <end position="274"/>
    </location>
</feature>
<feature type="compositionally biased region" description="Low complexity" evidence="4">
    <location>
        <begin position="129"/>
        <end position="146"/>
    </location>
</feature>
<evidence type="ECO:0000250" key="1"/>
<evidence type="ECO:0000255" key="2">
    <source>
        <dbReference type="PROSITE-ProRule" id="PRU00125"/>
    </source>
</evidence>
<evidence type="ECO:0000255" key="3">
    <source>
        <dbReference type="PROSITE-ProRule" id="PRU00143"/>
    </source>
</evidence>
<evidence type="ECO:0000256" key="4">
    <source>
        <dbReference type="SAM" id="MobiDB-lite"/>
    </source>
</evidence>
<accession>Q6GLJ6</accession>
<gene>
    <name type="primary">pdlim3</name>
</gene>